<reference key="1">
    <citation type="journal article" date="2006" name="J. Bacteriol.">
        <title>The genome sequence of Methanosphaera stadtmanae reveals why this human intestinal archaeon is restricted to methanol and H2 for methane formation and ATP synthesis.</title>
        <authorList>
            <person name="Fricke W.F."/>
            <person name="Seedorf H."/>
            <person name="Henne A."/>
            <person name="Kruer M."/>
            <person name="Liesegang H."/>
            <person name="Hedderich R."/>
            <person name="Gottschalk G."/>
            <person name="Thauer R.K."/>
        </authorList>
    </citation>
    <scope>NUCLEOTIDE SEQUENCE [LARGE SCALE GENOMIC DNA]</scope>
    <source>
        <strain>ATCC 43021 / DSM 3091 / JCM 11832 / MCB-3</strain>
    </source>
</reference>
<evidence type="ECO:0000255" key="1">
    <source>
        <dbReference type="HAMAP-Rule" id="MF_00232"/>
    </source>
</evidence>
<name>IF2B_METST</name>
<feature type="chain" id="PRO_0000336758" description="Translation initiation factor 2 subunit beta">
    <location>
        <begin position="1"/>
        <end position="142"/>
    </location>
</feature>
<protein>
    <recommendedName>
        <fullName evidence="1">Translation initiation factor 2 subunit beta</fullName>
    </recommendedName>
    <alternativeName>
        <fullName evidence="1">aIF2-beta</fullName>
    </alternativeName>
    <alternativeName>
        <fullName evidence="1">eIF-2-beta</fullName>
    </alternativeName>
</protein>
<organism>
    <name type="scientific">Methanosphaera stadtmanae (strain ATCC 43021 / DSM 3091 / JCM 11832 / MCB-3)</name>
    <dbReference type="NCBI Taxonomy" id="339860"/>
    <lineage>
        <taxon>Archaea</taxon>
        <taxon>Methanobacteriati</taxon>
        <taxon>Methanobacteriota</taxon>
        <taxon>Methanomada group</taxon>
        <taxon>Methanobacteria</taxon>
        <taxon>Methanobacteriales</taxon>
        <taxon>Methanobacteriaceae</taxon>
        <taxon>Methanosphaera</taxon>
    </lineage>
</organism>
<comment type="function">
    <text evidence="1">eIF-2 functions in the early steps of protein synthesis by forming a ternary complex with GTP and initiator tRNA.</text>
</comment>
<comment type="subunit">
    <text evidence="1">Heterotrimer composed of an alpha, a beta and a gamma chain.</text>
</comment>
<comment type="similarity">
    <text evidence="1">Belongs to the eIF-2-beta/eIF-5 family.</text>
</comment>
<accession>Q2NHD9</accession>
<proteinExistence type="inferred from homology"/>
<gene>
    <name evidence="1" type="primary">eif2b</name>
    <name type="ordered locus">Msp_0361</name>
</gene>
<dbReference type="EMBL" id="CP000102">
    <property type="protein sequence ID" value="ABC56764.1"/>
    <property type="molecule type" value="Genomic_DNA"/>
</dbReference>
<dbReference type="RefSeq" id="WP_011405964.1">
    <property type="nucleotide sequence ID" value="NC_007681.1"/>
</dbReference>
<dbReference type="SMR" id="Q2NHD9"/>
<dbReference type="STRING" id="339860.Msp_0361"/>
<dbReference type="KEGG" id="mst:Msp_0361"/>
<dbReference type="eggNOG" id="arCOG01640">
    <property type="taxonomic scope" value="Archaea"/>
</dbReference>
<dbReference type="HOGENOM" id="CLU_026663_3_1_2"/>
<dbReference type="OrthoDB" id="38099at2157"/>
<dbReference type="Proteomes" id="UP000001931">
    <property type="component" value="Chromosome"/>
</dbReference>
<dbReference type="GO" id="GO:0003743">
    <property type="term" value="F:translation initiation factor activity"/>
    <property type="evidence" value="ECO:0007669"/>
    <property type="project" value="UniProtKB-UniRule"/>
</dbReference>
<dbReference type="FunFam" id="3.30.30.170:FF:000001">
    <property type="entry name" value="Eukaryotic translation initiation factor 2 subunit"/>
    <property type="match status" value="1"/>
</dbReference>
<dbReference type="Gene3D" id="3.30.30.170">
    <property type="match status" value="1"/>
</dbReference>
<dbReference type="HAMAP" id="MF_00232">
    <property type="entry name" value="eIF_2_beta"/>
    <property type="match status" value="1"/>
</dbReference>
<dbReference type="InterPro" id="IPR045196">
    <property type="entry name" value="IF2/IF5"/>
</dbReference>
<dbReference type="InterPro" id="IPR004458">
    <property type="entry name" value="TIF2_bsu_arc"/>
</dbReference>
<dbReference type="InterPro" id="IPR002735">
    <property type="entry name" value="Transl_init_fac_IF2/IF5_dom"/>
</dbReference>
<dbReference type="InterPro" id="IPR016189">
    <property type="entry name" value="Transl_init_fac_IF2/IF5_N"/>
</dbReference>
<dbReference type="InterPro" id="IPR016190">
    <property type="entry name" value="Transl_init_fac_IF2/IF5_Zn-bd"/>
</dbReference>
<dbReference type="NCBIfam" id="TIGR00311">
    <property type="entry name" value="aIF-2beta"/>
    <property type="match status" value="1"/>
</dbReference>
<dbReference type="NCBIfam" id="NF003067">
    <property type="entry name" value="PRK03988.1"/>
    <property type="match status" value="1"/>
</dbReference>
<dbReference type="PANTHER" id="PTHR23001">
    <property type="entry name" value="EUKARYOTIC TRANSLATION INITIATION FACTOR"/>
    <property type="match status" value="1"/>
</dbReference>
<dbReference type="PANTHER" id="PTHR23001:SF3">
    <property type="entry name" value="EUKARYOTIC TRANSLATION INITIATION FACTOR 2 SUBUNIT 2"/>
    <property type="match status" value="1"/>
</dbReference>
<dbReference type="Pfam" id="PF01873">
    <property type="entry name" value="eIF-5_eIF-2B"/>
    <property type="match status" value="1"/>
</dbReference>
<dbReference type="SMART" id="SM00653">
    <property type="entry name" value="eIF2B_5"/>
    <property type="match status" value="1"/>
</dbReference>
<dbReference type="SUPFAM" id="SSF100966">
    <property type="entry name" value="Translation initiation factor 2 beta, aIF2beta, N-terminal domain"/>
    <property type="match status" value="1"/>
</dbReference>
<dbReference type="SUPFAM" id="SSF75689">
    <property type="entry name" value="Zinc-binding domain of translation initiation factor 2 beta"/>
    <property type="match status" value="1"/>
</dbReference>
<sequence>MAKENAEFKEYEKLLDQAYEQLPDKIFEAKRFKVPKGYSVIQGNRTIIKNFGDVSRTLNRDPQHVLKYLLRELGTSGNVEGNRAILQGKFTHYVINDRVKEYVDNFVMCHECNRPDTVIIREDRIDMLKCSACGARAPLKSL</sequence>
<keyword id="KW-0396">Initiation factor</keyword>
<keyword id="KW-0648">Protein biosynthesis</keyword>
<keyword id="KW-1185">Reference proteome</keyword>